<protein>
    <recommendedName>
        <fullName>Ribitol-5-phosphate transferase FKTN</fullName>
        <ecNumber evidence="17 20">2.7.8.-</ecNumber>
    </recommendedName>
    <alternativeName>
        <fullName evidence="25">Fukutin</fullName>
    </alternativeName>
    <alternativeName>
        <fullName evidence="25">Fukuyama-type congenital muscular dystrophy protein</fullName>
    </alternativeName>
    <alternativeName>
        <fullName evidence="24">Ribitol-5-phosphate transferase</fullName>
    </alternativeName>
</protein>
<name>FKTN_HUMAN</name>
<feature type="chain" id="PRO_0000204720" description="Ribitol-5-phosphate transferase FKTN">
    <location>
        <begin position="1"/>
        <end position="461"/>
    </location>
</feature>
<feature type="topological domain" description="Cytoplasmic" evidence="2">
    <location>
        <begin position="1"/>
        <end position="7"/>
    </location>
</feature>
<feature type="transmembrane region" description="Helical; Signal-anchor for type II membrane protein" evidence="2">
    <location>
        <begin position="8"/>
        <end position="28"/>
    </location>
</feature>
<feature type="topological domain" description="Lumenal" evidence="2">
    <location>
        <begin position="29"/>
        <end position="461"/>
    </location>
</feature>
<feature type="region of interest" description="Required and sufficient for interaction with POMGNT1" evidence="7">
    <location>
        <begin position="6"/>
        <end position="27"/>
    </location>
</feature>
<feature type="glycosylation site" description="N-linked (GlcNAc...) asparagine" evidence="2">
    <location>
        <position position="92"/>
    </location>
</feature>
<feature type="splice variant" id="VSP_045961" description="In isoform 2." evidence="23">
    <original>TWKIPVKTWDWKRSPPNVQPNGIWPISEWDEVIQLY</original>
    <variation>NQQGA</variation>
    <location>
        <begin position="426"/>
        <end position="461"/>
    </location>
</feature>
<feature type="sequence variant" id="VAR_061296" description="In dbSNP:rs41277797.">
    <original>R</original>
    <variation>C</variation>
    <location>
        <position position="56"/>
    </location>
</feature>
<feature type="sequence variant" id="VAR_065050" description="In MDDGC4; dbSNP:rs119463995." evidence="13">
    <original>A</original>
    <variation>T</variation>
    <location>
        <position position="114"/>
    </location>
</feature>
<feature type="sequence variant" id="VAR_033926" description="In a patient diagnosed with Walker-Warburg syndrome; dbSNP:rs34006675." evidence="10">
    <original>G</original>
    <variation>S</variation>
    <location>
        <position position="125"/>
    </location>
</feature>
<feature type="sequence variant" id="VAR_065051" description="In MDDGA4; dbSNP:rs119464997." evidence="11">
    <original>A</original>
    <variation>E</variation>
    <location>
        <position position="170"/>
    </location>
</feature>
<feature type="sequence variant" id="VAR_065052" description="In MDDGC4; dbSNP:rs119463996." evidence="13">
    <original>F</original>
    <variation>S</variation>
    <location>
        <position position="176"/>
    </location>
</feature>
<feature type="sequence variant" id="VAR_039287" description="In CMD1X; dbSNP:rs119463994." evidence="8">
    <original>R</original>
    <variation>T</variation>
    <location>
        <position position="179"/>
    </location>
</feature>
<feature type="sequence variant" id="VAR_033927" description="In dbSNP:rs34787999." evidence="21">
    <original>R</original>
    <variation>Q</variation>
    <location>
        <position position="203"/>
    </location>
</feature>
<feature type="sequence variant" id="VAR_036334" description="In a breast cancer sample; somatic mutation; dbSNP:rs779298204." evidence="6">
    <original>D</original>
    <variation>E</variation>
    <location>
        <position position="225"/>
    </location>
</feature>
<feature type="sequence variant" id="VAR_036335" description="In a breast cancer sample; somatic mutation; dbSNP:rs1298422772." evidence="6">
    <original>D</original>
    <variation>N</variation>
    <location>
        <position position="225"/>
    </location>
</feature>
<feature type="sequence variant" id="VAR_065053" description="In MDDGB4." evidence="11">
    <original>R</original>
    <variation>G</variation>
    <location>
        <position position="246"/>
    </location>
</feature>
<feature type="sequence variant" id="VAR_018278" description="In MDDGA4." evidence="3">
    <original>C</original>
    <variation>G</variation>
    <location>
        <position position="250"/>
    </location>
</feature>
<feature type="sequence variant" id="VAR_039288" description="In MDDGB4 and MDDGC4; the mutant protein is expressed and localized correctly within the cell, decrease in ribitol-5-phosphate transferase activity.; dbSNP:rs119463992." evidence="9 11 12 17">
    <original>R</original>
    <variation>Q</variation>
    <location>
        <position position="307"/>
    </location>
</feature>
<feature type="sequence variant" id="VAR_039289" description="In CMD1X; dbSNP:rs119463993." evidence="8">
    <original>Q</original>
    <variation>P</variation>
    <location>
        <position position="358"/>
    </location>
</feature>
<feature type="sequence variant" id="VAR_065054" description="In MDDGA4; loss of normal location in Golgi membranes; dbSNP:rs119464998." evidence="7 11">
    <original>Y</original>
    <variation>C</variation>
    <location>
        <position position="371"/>
    </location>
</feature>
<feature type="sequence variant" id="VAR_018279" description="In dbSNP:rs41313301." evidence="5">
    <original>N</original>
    <variation>D</variation>
    <location>
        <position position="446"/>
    </location>
</feature>
<feature type="mutagenesis site" description="Decrease in ribitol-5-phosphate transferase activity." evidence="17">
    <original>M</original>
    <variation>T</variation>
    <location>
        <position position="133"/>
    </location>
</feature>
<feature type="mutagenesis site" description="Decrease in ribitol-5-phosphate transferase activity." evidence="17">
    <original>D</original>
    <variation>A</variation>
    <location>
        <position position="317"/>
    </location>
</feature>
<feature type="sequence conflict" description="In Ref. 3; BAG62491." evidence="26" ref="3">
    <original>E</original>
    <variation>K</variation>
    <location>
        <position position="414"/>
    </location>
</feature>
<sequence>MSRINKNVVLALLTLTSSAFLLFQLYYYKHYLSTKNGAGLSKSKGSRIGFDSTQWRAVKKFIMLTSNQNVPVFLIDPLILELINKNFEQVKNTSHGSTSQCKFFCVPRDFTAFALQYHLWKNEEGWFRIAENMGFQCLKIESKDPRLDGIDSLSGTEIPLHYICKLATHAIHLVVFHERSGNYLWHGHLRLKEHIDRKFVPFRKLQFGRYPGAFDRPELQQVTVDGLEVLIPKDPMHFVEEVPHSRFIECRYKEARAFFQQYLDDNTVEAVAFRKSAKELLQLAAKTLNKLGVPFWLSSGTCLGWYRQCNIIPYSKDVDLGIFIQDYKSDIILAFQDAGLPLKHKFGKVEDSLELSFQGKDDVKLDVFFFYEETDHMWNGGTQAKTGKKFKYLFPKFTLCWTEFVDMKVHVPCETLEYIEANYGKTWKIPVKTWDWKRSPPNVQPNGIWPISEWDEVIQLY</sequence>
<accession>O75072</accession>
<accession>B4DUX9</accession>
<accession>J3KP13</accession>
<accession>Q3MIJ1</accession>
<accession>Q96TE1</accession>
<accession>Q9P295</accession>
<evidence type="ECO:0000250" key="1">
    <source>
        <dbReference type="UniProtKB" id="Q8R507"/>
    </source>
</evidence>
<evidence type="ECO:0000255" key="2"/>
<evidence type="ECO:0000269" key="3">
    <source>
    </source>
</evidence>
<evidence type="ECO:0000269" key="4">
    <source>
    </source>
</evidence>
<evidence type="ECO:0000269" key="5">
    <source>
    </source>
</evidence>
<evidence type="ECO:0000269" key="6">
    <source>
    </source>
</evidence>
<evidence type="ECO:0000269" key="7">
    <source>
    </source>
</evidence>
<evidence type="ECO:0000269" key="8">
    <source>
    </source>
</evidence>
<evidence type="ECO:0000269" key="9">
    <source>
    </source>
</evidence>
<evidence type="ECO:0000269" key="10">
    <source>
    </source>
</evidence>
<evidence type="ECO:0000269" key="11">
    <source>
    </source>
</evidence>
<evidence type="ECO:0000269" key="12">
    <source>
    </source>
</evidence>
<evidence type="ECO:0000269" key="13">
    <source>
    </source>
</evidence>
<evidence type="ECO:0000269" key="14">
    <source>
    </source>
</evidence>
<evidence type="ECO:0000269" key="15">
    <source>
    </source>
</evidence>
<evidence type="ECO:0000269" key="16">
    <source>
    </source>
</evidence>
<evidence type="ECO:0000269" key="17">
    <source>
    </source>
</evidence>
<evidence type="ECO:0000269" key="18">
    <source>
    </source>
</evidence>
<evidence type="ECO:0000269" key="19">
    <source>
    </source>
</evidence>
<evidence type="ECO:0000269" key="20">
    <source>
    </source>
</evidence>
<evidence type="ECO:0000269" key="21">
    <source>
    </source>
</evidence>
<evidence type="ECO:0000303" key="22">
    <source>
    </source>
</evidence>
<evidence type="ECO:0000303" key="23">
    <source>
    </source>
</evidence>
<evidence type="ECO:0000303" key="24">
    <source>
    </source>
</evidence>
<evidence type="ECO:0000303" key="25">
    <source>
    </source>
</evidence>
<evidence type="ECO:0000305" key="26"/>
<evidence type="ECO:0000305" key="27">
    <source>
    </source>
</evidence>
<evidence type="ECO:0000305" key="28">
    <source>
    </source>
</evidence>
<evidence type="ECO:0000312" key="29">
    <source>
        <dbReference type="HGNC" id="HGNC:3622"/>
    </source>
</evidence>
<organism>
    <name type="scientific">Homo sapiens</name>
    <name type="common">Human</name>
    <dbReference type="NCBI Taxonomy" id="9606"/>
    <lineage>
        <taxon>Eukaryota</taxon>
        <taxon>Metazoa</taxon>
        <taxon>Chordata</taxon>
        <taxon>Craniata</taxon>
        <taxon>Vertebrata</taxon>
        <taxon>Euteleostomi</taxon>
        <taxon>Mammalia</taxon>
        <taxon>Eutheria</taxon>
        <taxon>Euarchontoglires</taxon>
        <taxon>Primates</taxon>
        <taxon>Haplorrhini</taxon>
        <taxon>Catarrhini</taxon>
        <taxon>Hominidae</taxon>
        <taxon>Homo</taxon>
    </lineage>
</organism>
<gene>
    <name evidence="29" type="primary">FKTN</name>
    <name evidence="22" type="synonym">FCMD</name>
</gene>
<proteinExistence type="evidence at protein level"/>
<dbReference type="EC" id="2.7.8.-" evidence="17 20"/>
<dbReference type="EMBL" id="AB008226">
    <property type="protein sequence ID" value="BAA32000.1"/>
    <property type="molecule type" value="mRNA"/>
</dbReference>
<dbReference type="EMBL" id="AB038490">
    <property type="protein sequence ID" value="BAA94082.1"/>
    <property type="molecule type" value="Genomic_DNA"/>
</dbReference>
<dbReference type="EMBL" id="AK300840">
    <property type="protein sequence ID" value="BAG62491.1"/>
    <property type="molecule type" value="mRNA"/>
</dbReference>
<dbReference type="EMBL" id="AL158070">
    <property type="status" value="NOT_ANNOTATED_CDS"/>
    <property type="molecule type" value="Genomic_DNA"/>
</dbReference>
<dbReference type="EMBL" id="BC101808">
    <property type="protein sequence ID" value="AAI01809.1"/>
    <property type="molecule type" value="mRNA"/>
</dbReference>
<dbReference type="EMBL" id="BC112038">
    <property type="protein sequence ID" value="AAI12039.1"/>
    <property type="molecule type" value="mRNA"/>
</dbReference>
<dbReference type="EMBL" id="BC117699">
    <property type="protein sequence ID" value="AAI17700.1"/>
    <property type="molecule type" value="mRNA"/>
</dbReference>
<dbReference type="CCDS" id="CCDS6766.1">
    <molecule id="O75072-1"/>
</dbReference>
<dbReference type="RefSeq" id="NP_001073270.1">
    <molecule id="O75072-1"/>
    <property type="nucleotide sequence ID" value="NM_001079802.2"/>
</dbReference>
<dbReference type="RefSeq" id="NP_001185892.1">
    <molecule id="O75072-2"/>
    <property type="nucleotide sequence ID" value="NM_001198963.2"/>
</dbReference>
<dbReference type="RefSeq" id="NP_001338425.1">
    <molecule id="O75072-1"/>
    <property type="nucleotide sequence ID" value="NM_001351496.2"/>
</dbReference>
<dbReference type="RefSeq" id="NP_006722.2">
    <molecule id="O75072-1"/>
    <property type="nucleotide sequence ID" value="NM_006731.2"/>
</dbReference>
<dbReference type="RefSeq" id="XP_016869955.1">
    <property type="nucleotide sequence ID" value="XM_017014466.1"/>
</dbReference>
<dbReference type="RefSeq" id="XP_016869956.1">
    <property type="nucleotide sequence ID" value="XM_017014467.1"/>
</dbReference>
<dbReference type="RefSeq" id="XP_016869957.1">
    <property type="nucleotide sequence ID" value="XM_017014468.1"/>
</dbReference>
<dbReference type="RefSeq" id="XP_047278929.1">
    <molecule id="O75072-1"/>
    <property type="nucleotide sequence ID" value="XM_047422973.1"/>
</dbReference>
<dbReference type="RefSeq" id="XP_047278930.1">
    <molecule id="O75072-1"/>
    <property type="nucleotide sequence ID" value="XM_047422974.1"/>
</dbReference>
<dbReference type="RefSeq" id="XP_047278931.1">
    <molecule id="O75072-1"/>
    <property type="nucleotide sequence ID" value="XM_047422975.1"/>
</dbReference>
<dbReference type="RefSeq" id="XP_047278932.1">
    <molecule id="O75072-1"/>
    <property type="nucleotide sequence ID" value="XM_047422976.1"/>
</dbReference>
<dbReference type="RefSeq" id="XP_047278933.1">
    <molecule id="O75072-1"/>
    <property type="nucleotide sequence ID" value="XM_047422977.1"/>
</dbReference>
<dbReference type="RefSeq" id="XP_047278934.1">
    <molecule id="O75072-1"/>
    <property type="nucleotide sequence ID" value="XM_047422978.1"/>
</dbReference>
<dbReference type="RefSeq" id="XP_047278935.1">
    <molecule id="O75072-1"/>
    <property type="nucleotide sequence ID" value="XM_047422979.1"/>
</dbReference>
<dbReference type="RefSeq" id="XP_047278936.1">
    <molecule id="O75072-1"/>
    <property type="nucleotide sequence ID" value="XM_047422980.1"/>
</dbReference>
<dbReference type="BioGRID" id="108512">
    <property type="interactions" value="14"/>
</dbReference>
<dbReference type="ComplexPortal" id="CPX-7722">
    <property type="entry name" value="Fukutin-FKRP-TMEM5 multienzyme complex"/>
</dbReference>
<dbReference type="FunCoup" id="O75072">
    <property type="interactions" value="1128"/>
</dbReference>
<dbReference type="IntAct" id="O75072">
    <property type="interactions" value="8"/>
</dbReference>
<dbReference type="STRING" id="9606.ENSP00000223528"/>
<dbReference type="GlyCosmos" id="O75072">
    <property type="glycosylation" value="1 site, No reported glycans"/>
</dbReference>
<dbReference type="GlyGen" id="O75072">
    <property type="glycosylation" value="1 site, 1 N-linked glycan (1 site)"/>
</dbReference>
<dbReference type="iPTMnet" id="O75072"/>
<dbReference type="PhosphoSitePlus" id="O75072"/>
<dbReference type="BioMuta" id="FKTN"/>
<dbReference type="jPOST" id="O75072"/>
<dbReference type="MassIVE" id="O75072"/>
<dbReference type="PaxDb" id="9606-ENSP00000223528"/>
<dbReference type="PeptideAtlas" id="O75072"/>
<dbReference type="ProteomicsDB" id="49738">
    <molecule id="O75072-1"/>
</dbReference>
<dbReference type="Antibodypedia" id="2319">
    <property type="antibodies" value="178 antibodies from 32 providers"/>
</dbReference>
<dbReference type="DNASU" id="2218"/>
<dbReference type="Ensembl" id="ENST00000223528.6">
    <molecule id="O75072-1"/>
    <property type="protein sequence ID" value="ENSP00000223528.2"/>
    <property type="gene ID" value="ENSG00000106692.15"/>
</dbReference>
<dbReference type="Ensembl" id="ENST00000357998.10">
    <molecule id="O75072-1"/>
    <property type="protein sequence ID" value="ENSP00000350687.6"/>
    <property type="gene ID" value="ENSG00000106692.15"/>
</dbReference>
<dbReference type="Ensembl" id="ENST00000448551.6">
    <molecule id="O75072-2"/>
    <property type="protein sequence ID" value="ENSP00000399140.2"/>
    <property type="gene ID" value="ENSG00000106692.15"/>
</dbReference>
<dbReference type="GeneID" id="2218"/>
<dbReference type="KEGG" id="hsa:2218"/>
<dbReference type="MANE-Select" id="ENST00000357998.10">
    <property type="protein sequence ID" value="ENSP00000350687.6"/>
    <property type="RefSeq nucleotide sequence ID" value="NM_001079802.2"/>
    <property type="RefSeq protein sequence ID" value="NP_001073270.1"/>
</dbReference>
<dbReference type="UCSC" id="uc004bcr.4">
    <molecule id="O75072-1"/>
    <property type="organism name" value="human"/>
</dbReference>
<dbReference type="AGR" id="HGNC:3622"/>
<dbReference type="CTD" id="2218"/>
<dbReference type="DisGeNET" id="2218"/>
<dbReference type="GeneCards" id="FKTN"/>
<dbReference type="GeneReviews" id="FKTN"/>
<dbReference type="HGNC" id="HGNC:3622">
    <property type="gene designation" value="FKTN"/>
</dbReference>
<dbReference type="HPA" id="ENSG00000106692">
    <property type="expression patterns" value="Low tissue specificity"/>
</dbReference>
<dbReference type="MalaCards" id="FKTN"/>
<dbReference type="MIM" id="253800">
    <property type="type" value="phenotype"/>
</dbReference>
<dbReference type="MIM" id="607440">
    <property type="type" value="gene"/>
</dbReference>
<dbReference type="MIM" id="611588">
    <property type="type" value="phenotype"/>
</dbReference>
<dbReference type="MIM" id="611615">
    <property type="type" value="phenotype"/>
</dbReference>
<dbReference type="MIM" id="613152">
    <property type="type" value="phenotype"/>
</dbReference>
<dbReference type="neXtProt" id="NX_O75072"/>
<dbReference type="OpenTargets" id="ENSG00000106692"/>
<dbReference type="Orphanet" id="370980">
    <property type="disease" value="Congenital muscular dystrophy without intellectual disability"/>
</dbReference>
<dbReference type="Orphanet" id="272">
    <property type="disease" value="Congenital muscular dystrophy, Fukuyama type"/>
</dbReference>
<dbReference type="Orphanet" id="154">
    <property type="disease" value="Familial isolated dilated cardiomyopathy"/>
</dbReference>
<dbReference type="Orphanet" id="206554">
    <property type="disease" value="Fukutin-related limb-girdle muscular dystrophy R13"/>
</dbReference>
<dbReference type="Orphanet" id="588">
    <property type="disease" value="Muscle-eye-brain disease"/>
</dbReference>
<dbReference type="Orphanet" id="899">
    <property type="disease" value="Walker-Warburg syndrome"/>
</dbReference>
<dbReference type="PharmGKB" id="PA162388669"/>
<dbReference type="VEuPathDB" id="HostDB:ENSG00000106692"/>
<dbReference type="eggNOG" id="ENOG502QUDN">
    <property type="taxonomic scope" value="Eukaryota"/>
</dbReference>
<dbReference type="GeneTree" id="ENSGT00390000014471"/>
<dbReference type="HOGENOM" id="CLU_047572_0_0_1"/>
<dbReference type="InParanoid" id="O75072"/>
<dbReference type="OMA" id="ICKWATH"/>
<dbReference type="OrthoDB" id="444255at2759"/>
<dbReference type="PAN-GO" id="O75072">
    <property type="GO annotations" value="2 GO annotations based on evolutionary models"/>
</dbReference>
<dbReference type="PhylomeDB" id="O75072"/>
<dbReference type="TreeFam" id="TF319633"/>
<dbReference type="BioCyc" id="MetaCyc:ENSG00000106692-MONOMER"/>
<dbReference type="PathwayCommons" id="O75072"/>
<dbReference type="SignaLink" id="O75072"/>
<dbReference type="UniPathway" id="UPA00378"/>
<dbReference type="BioGRID-ORCS" id="2218">
    <property type="hits" value="12 hits in 1160 CRISPR screens"/>
</dbReference>
<dbReference type="ChiTaRS" id="FKTN">
    <property type="organism name" value="human"/>
</dbReference>
<dbReference type="GeneWiki" id="Fukutin"/>
<dbReference type="GenomeRNAi" id="2218"/>
<dbReference type="Pharos" id="O75072">
    <property type="development level" value="Tbio"/>
</dbReference>
<dbReference type="PRO" id="PR:O75072"/>
<dbReference type="Proteomes" id="UP000005640">
    <property type="component" value="Chromosome 9"/>
</dbReference>
<dbReference type="RNAct" id="O75072">
    <property type="molecule type" value="protein"/>
</dbReference>
<dbReference type="Bgee" id="ENSG00000106692">
    <property type="expression patterns" value="Expressed in calcaneal tendon and 191 other cell types or tissues"/>
</dbReference>
<dbReference type="ExpressionAtlas" id="O75072">
    <property type="expression patterns" value="baseline and differential"/>
</dbReference>
<dbReference type="GO" id="GO:0005801">
    <property type="term" value="C:cis-Golgi network"/>
    <property type="evidence" value="ECO:0000314"/>
    <property type="project" value="UniProtKB"/>
</dbReference>
<dbReference type="GO" id="GO:0005783">
    <property type="term" value="C:endoplasmic reticulum"/>
    <property type="evidence" value="ECO:0000314"/>
    <property type="project" value="BHF-UCL"/>
</dbReference>
<dbReference type="GO" id="GO:0005615">
    <property type="term" value="C:extracellular space"/>
    <property type="evidence" value="ECO:0000304"/>
    <property type="project" value="ProtInc"/>
</dbReference>
<dbReference type="GO" id="GO:0005794">
    <property type="term" value="C:Golgi apparatus"/>
    <property type="evidence" value="ECO:0000314"/>
    <property type="project" value="UniProtKB"/>
</dbReference>
<dbReference type="GO" id="GO:0000139">
    <property type="term" value="C:Golgi membrane"/>
    <property type="evidence" value="ECO:0000314"/>
    <property type="project" value="UniProtKB"/>
</dbReference>
<dbReference type="GO" id="GO:0005634">
    <property type="term" value="C:nucleus"/>
    <property type="evidence" value="ECO:0000314"/>
    <property type="project" value="BHF-UCL"/>
</dbReference>
<dbReference type="GO" id="GO:0016780">
    <property type="term" value="F:phosphotransferase activity, for other substituted phosphate groups"/>
    <property type="evidence" value="ECO:0000314"/>
    <property type="project" value="UniProtKB"/>
</dbReference>
<dbReference type="GO" id="GO:0071711">
    <property type="term" value="P:basement membrane organization"/>
    <property type="evidence" value="ECO:0007669"/>
    <property type="project" value="Ensembl"/>
</dbReference>
<dbReference type="GO" id="GO:0021695">
    <property type="term" value="P:cerebellar cortex development"/>
    <property type="evidence" value="ECO:0007669"/>
    <property type="project" value="Ensembl"/>
</dbReference>
<dbReference type="GO" id="GO:0021987">
    <property type="term" value="P:cerebral cortex development"/>
    <property type="evidence" value="ECO:0007669"/>
    <property type="project" value="Ensembl"/>
</dbReference>
<dbReference type="GO" id="GO:0007517">
    <property type="term" value="P:muscle organ development"/>
    <property type="evidence" value="ECO:0000304"/>
    <property type="project" value="ProtInc"/>
</dbReference>
<dbReference type="GO" id="GO:0008285">
    <property type="term" value="P:negative regulation of cell population proliferation"/>
    <property type="evidence" value="ECO:0000315"/>
    <property type="project" value="BHF-UCL"/>
</dbReference>
<dbReference type="GO" id="GO:0046329">
    <property type="term" value="P:negative regulation of JNK cascade"/>
    <property type="evidence" value="ECO:0000315"/>
    <property type="project" value="BHF-UCL"/>
</dbReference>
<dbReference type="GO" id="GO:0007399">
    <property type="term" value="P:nervous system development"/>
    <property type="evidence" value="ECO:0000304"/>
    <property type="project" value="ProtInc"/>
</dbReference>
<dbReference type="GO" id="GO:0006486">
    <property type="term" value="P:protein glycosylation"/>
    <property type="evidence" value="ECO:0000318"/>
    <property type="project" value="GO_Central"/>
</dbReference>
<dbReference type="GO" id="GO:0006493">
    <property type="term" value="P:protein O-linked glycosylation"/>
    <property type="evidence" value="ECO:0000315"/>
    <property type="project" value="UniProtKB"/>
</dbReference>
<dbReference type="GO" id="GO:0035269">
    <property type="term" value="P:protein O-linked mannosylation"/>
    <property type="evidence" value="ECO:0000315"/>
    <property type="project" value="UniProtKB"/>
</dbReference>
<dbReference type="GO" id="GO:0060049">
    <property type="term" value="P:regulation of protein glycosylation"/>
    <property type="evidence" value="ECO:0000303"/>
    <property type="project" value="BHF-UCL"/>
</dbReference>
<dbReference type="GO" id="GO:0098528">
    <property type="term" value="P:skeletal muscle fiber differentiation"/>
    <property type="evidence" value="ECO:0007669"/>
    <property type="project" value="Ensembl"/>
</dbReference>
<dbReference type="InterPro" id="IPR009644">
    <property type="entry name" value="FKTN-rel"/>
</dbReference>
<dbReference type="InterPro" id="IPR045587">
    <property type="entry name" value="FKTN_N"/>
</dbReference>
<dbReference type="InterPro" id="IPR007074">
    <property type="entry name" value="LicD/FKTN/FKRP_NTP_transf"/>
</dbReference>
<dbReference type="PANTHER" id="PTHR15407">
    <property type="entry name" value="FUKUTIN-RELATED"/>
    <property type="match status" value="1"/>
</dbReference>
<dbReference type="PANTHER" id="PTHR15407:SF28">
    <property type="entry name" value="RIBITOL-5-PHOSPHATE TRANSFERASE FKTN"/>
    <property type="match status" value="1"/>
</dbReference>
<dbReference type="Pfam" id="PF19737">
    <property type="entry name" value="FKTN_N"/>
    <property type="match status" value="1"/>
</dbReference>
<dbReference type="Pfam" id="PF04991">
    <property type="entry name" value="LicD"/>
    <property type="match status" value="1"/>
</dbReference>
<reference key="1">
    <citation type="journal article" date="1998" name="Nature">
        <title>An ancient retrotransposal insertion causes Fukuyama-type congenital muscular dystrophy.</title>
        <authorList>
            <person name="Kobayashi K."/>
            <person name="Nakahori Y."/>
            <person name="Miyake M."/>
            <person name="Matsumura K."/>
            <person name="Kondo-Iida E."/>
            <person name="Nomura Y."/>
            <person name="Segawa M."/>
            <person name="Yoshioka M."/>
            <person name="Saito K."/>
            <person name="Osawa M."/>
            <person name="Hamano K."/>
            <person name="Sakakihara Y."/>
            <person name="Nonaka I."/>
            <person name="Nakagome Y."/>
            <person name="Kanazawa I."/>
            <person name="Nakamura Y."/>
            <person name="Tokunaga K."/>
            <person name="Toda T."/>
        </authorList>
    </citation>
    <scope>NUCLEOTIDE SEQUENCE [MRNA] (ISOFORM 1)</scope>
    <scope>VARIANT GLN-203</scope>
    <source>
        <tissue>Brain</tissue>
    </source>
</reference>
<reference key="2">
    <citation type="journal article" date="2001" name="FEBS Lett.">
        <title>Structural organization, complete genomic sequences and mutational analyses of the Fukuyama-type congenital muscular dystrophy gene, fukutin.</title>
        <authorList>
            <person name="Kobayashi K."/>
            <person name="Sasaki J."/>
            <person name="Kondo-Iida E."/>
            <person name="Fukuda Y."/>
            <person name="Kinoshita M."/>
            <person name="Sunada Y."/>
            <person name="Nakamura Y."/>
            <person name="Toda T."/>
        </authorList>
    </citation>
    <scope>NUCLEOTIDE SEQUENCE [GENOMIC DNA]</scope>
</reference>
<reference key="3">
    <citation type="journal article" date="2004" name="Nat. Genet.">
        <title>Complete sequencing and characterization of 21,243 full-length human cDNAs.</title>
        <authorList>
            <person name="Ota T."/>
            <person name="Suzuki Y."/>
            <person name="Nishikawa T."/>
            <person name="Otsuki T."/>
            <person name="Sugiyama T."/>
            <person name="Irie R."/>
            <person name="Wakamatsu A."/>
            <person name="Hayashi K."/>
            <person name="Sato H."/>
            <person name="Nagai K."/>
            <person name="Kimura K."/>
            <person name="Makita H."/>
            <person name="Sekine M."/>
            <person name="Obayashi M."/>
            <person name="Nishi T."/>
            <person name="Shibahara T."/>
            <person name="Tanaka T."/>
            <person name="Ishii S."/>
            <person name="Yamamoto J."/>
            <person name="Saito K."/>
            <person name="Kawai Y."/>
            <person name="Isono Y."/>
            <person name="Nakamura Y."/>
            <person name="Nagahari K."/>
            <person name="Murakami K."/>
            <person name="Yasuda T."/>
            <person name="Iwayanagi T."/>
            <person name="Wagatsuma M."/>
            <person name="Shiratori A."/>
            <person name="Sudo H."/>
            <person name="Hosoiri T."/>
            <person name="Kaku Y."/>
            <person name="Kodaira H."/>
            <person name="Kondo H."/>
            <person name="Sugawara M."/>
            <person name="Takahashi M."/>
            <person name="Kanda K."/>
            <person name="Yokoi T."/>
            <person name="Furuya T."/>
            <person name="Kikkawa E."/>
            <person name="Omura Y."/>
            <person name="Abe K."/>
            <person name="Kamihara K."/>
            <person name="Katsuta N."/>
            <person name="Sato K."/>
            <person name="Tanikawa M."/>
            <person name="Yamazaki M."/>
            <person name="Ninomiya K."/>
            <person name="Ishibashi T."/>
            <person name="Yamashita H."/>
            <person name="Murakawa K."/>
            <person name="Fujimori K."/>
            <person name="Tanai H."/>
            <person name="Kimata M."/>
            <person name="Watanabe M."/>
            <person name="Hiraoka S."/>
            <person name="Chiba Y."/>
            <person name="Ishida S."/>
            <person name="Ono Y."/>
            <person name="Takiguchi S."/>
            <person name="Watanabe S."/>
            <person name="Yosida M."/>
            <person name="Hotuta T."/>
            <person name="Kusano J."/>
            <person name="Kanehori K."/>
            <person name="Takahashi-Fujii A."/>
            <person name="Hara H."/>
            <person name="Tanase T.-O."/>
            <person name="Nomura Y."/>
            <person name="Togiya S."/>
            <person name="Komai F."/>
            <person name="Hara R."/>
            <person name="Takeuchi K."/>
            <person name="Arita M."/>
            <person name="Imose N."/>
            <person name="Musashino K."/>
            <person name="Yuuki H."/>
            <person name="Oshima A."/>
            <person name="Sasaki N."/>
            <person name="Aotsuka S."/>
            <person name="Yoshikawa Y."/>
            <person name="Matsunawa H."/>
            <person name="Ichihara T."/>
            <person name="Shiohata N."/>
            <person name="Sano S."/>
            <person name="Moriya S."/>
            <person name="Momiyama H."/>
            <person name="Satoh N."/>
            <person name="Takami S."/>
            <person name="Terashima Y."/>
            <person name="Suzuki O."/>
            <person name="Nakagawa S."/>
            <person name="Senoh A."/>
            <person name="Mizoguchi H."/>
            <person name="Goto Y."/>
            <person name="Shimizu F."/>
            <person name="Wakebe H."/>
            <person name="Hishigaki H."/>
            <person name="Watanabe T."/>
            <person name="Sugiyama A."/>
            <person name="Takemoto M."/>
            <person name="Kawakami B."/>
            <person name="Yamazaki M."/>
            <person name="Watanabe K."/>
            <person name="Kumagai A."/>
            <person name="Itakura S."/>
            <person name="Fukuzumi Y."/>
            <person name="Fujimori Y."/>
            <person name="Komiyama M."/>
            <person name="Tashiro H."/>
            <person name="Tanigami A."/>
            <person name="Fujiwara T."/>
            <person name="Ono T."/>
            <person name="Yamada K."/>
            <person name="Fujii Y."/>
            <person name="Ozaki K."/>
            <person name="Hirao M."/>
            <person name="Ohmori Y."/>
            <person name="Kawabata A."/>
            <person name="Hikiji T."/>
            <person name="Kobatake N."/>
            <person name="Inagaki H."/>
            <person name="Ikema Y."/>
            <person name="Okamoto S."/>
            <person name="Okitani R."/>
            <person name="Kawakami T."/>
            <person name="Noguchi S."/>
            <person name="Itoh T."/>
            <person name="Shigeta K."/>
            <person name="Senba T."/>
            <person name="Matsumura K."/>
            <person name="Nakajima Y."/>
            <person name="Mizuno T."/>
            <person name="Morinaga M."/>
            <person name="Sasaki M."/>
            <person name="Togashi T."/>
            <person name="Oyama M."/>
            <person name="Hata H."/>
            <person name="Watanabe M."/>
            <person name="Komatsu T."/>
            <person name="Mizushima-Sugano J."/>
            <person name="Satoh T."/>
            <person name="Shirai Y."/>
            <person name="Takahashi Y."/>
            <person name="Nakagawa K."/>
            <person name="Okumura K."/>
            <person name="Nagase T."/>
            <person name="Nomura N."/>
            <person name="Kikuchi H."/>
            <person name="Masuho Y."/>
            <person name="Yamashita R."/>
            <person name="Nakai K."/>
            <person name="Yada T."/>
            <person name="Nakamura Y."/>
            <person name="Ohara O."/>
            <person name="Isogai T."/>
            <person name="Sugano S."/>
        </authorList>
    </citation>
    <scope>NUCLEOTIDE SEQUENCE [LARGE SCALE MRNA] (ISOFORM 2)</scope>
    <source>
        <tissue>Small intestine</tissue>
    </source>
</reference>
<reference key="4">
    <citation type="journal article" date="2004" name="Nature">
        <title>DNA sequence and analysis of human chromosome 9.</title>
        <authorList>
            <person name="Humphray S.J."/>
            <person name="Oliver K."/>
            <person name="Hunt A.R."/>
            <person name="Plumb R.W."/>
            <person name="Loveland J.E."/>
            <person name="Howe K.L."/>
            <person name="Andrews T.D."/>
            <person name="Searle S."/>
            <person name="Hunt S.E."/>
            <person name="Scott C.E."/>
            <person name="Jones M.C."/>
            <person name="Ainscough R."/>
            <person name="Almeida J.P."/>
            <person name="Ambrose K.D."/>
            <person name="Ashwell R.I.S."/>
            <person name="Babbage A.K."/>
            <person name="Babbage S."/>
            <person name="Bagguley C.L."/>
            <person name="Bailey J."/>
            <person name="Banerjee R."/>
            <person name="Barker D.J."/>
            <person name="Barlow K.F."/>
            <person name="Bates K."/>
            <person name="Beasley H."/>
            <person name="Beasley O."/>
            <person name="Bird C.P."/>
            <person name="Bray-Allen S."/>
            <person name="Brown A.J."/>
            <person name="Brown J.Y."/>
            <person name="Burford D."/>
            <person name="Burrill W."/>
            <person name="Burton J."/>
            <person name="Carder C."/>
            <person name="Carter N.P."/>
            <person name="Chapman J.C."/>
            <person name="Chen Y."/>
            <person name="Clarke G."/>
            <person name="Clark S.Y."/>
            <person name="Clee C.M."/>
            <person name="Clegg S."/>
            <person name="Collier R.E."/>
            <person name="Corby N."/>
            <person name="Crosier M."/>
            <person name="Cummings A.T."/>
            <person name="Davies J."/>
            <person name="Dhami P."/>
            <person name="Dunn M."/>
            <person name="Dutta I."/>
            <person name="Dyer L.W."/>
            <person name="Earthrowl M.E."/>
            <person name="Faulkner L."/>
            <person name="Fleming C.J."/>
            <person name="Frankish A."/>
            <person name="Frankland J.A."/>
            <person name="French L."/>
            <person name="Fricker D.G."/>
            <person name="Garner P."/>
            <person name="Garnett J."/>
            <person name="Ghori J."/>
            <person name="Gilbert J.G.R."/>
            <person name="Glison C."/>
            <person name="Grafham D.V."/>
            <person name="Gribble S."/>
            <person name="Griffiths C."/>
            <person name="Griffiths-Jones S."/>
            <person name="Grocock R."/>
            <person name="Guy J."/>
            <person name="Hall R.E."/>
            <person name="Hammond S."/>
            <person name="Harley J.L."/>
            <person name="Harrison E.S.I."/>
            <person name="Hart E.A."/>
            <person name="Heath P.D."/>
            <person name="Henderson C.D."/>
            <person name="Hopkins B.L."/>
            <person name="Howard P.J."/>
            <person name="Howden P.J."/>
            <person name="Huckle E."/>
            <person name="Johnson C."/>
            <person name="Johnson D."/>
            <person name="Joy A.A."/>
            <person name="Kay M."/>
            <person name="Keenan S."/>
            <person name="Kershaw J.K."/>
            <person name="Kimberley A.M."/>
            <person name="King A."/>
            <person name="Knights A."/>
            <person name="Laird G.K."/>
            <person name="Langford C."/>
            <person name="Lawlor S."/>
            <person name="Leongamornlert D.A."/>
            <person name="Leversha M."/>
            <person name="Lloyd C."/>
            <person name="Lloyd D.M."/>
            <person name="Lovell J."/>
            <person name="Martin S."/>
            <person name="Mashreghi-Mohammadi M."/>
            <person name="Matthews L."/>
            <person name="McLaren S."/>
            <person name="McLay K.E."/>
            <person name="McMurray A."/>
            <person name="Milne S."/>
            <person name="Nickerson T."/>
            <person name="Nisbett J."/>
            <person name="Nordsiek G."/>
            <person name="Pearce A.V."/>
            <person name="Peck A.I."/>
            <person name="Porter K.M."/>
            <person name="Pandian R."/>
            <person name="Pelan S."/>
            <person name="Phillimore B."/>
            <person name="Povey S."/>
            <person name="Ramsey Y."/>
            <person name="Rand V."/>
            <person name="Scharfe M."/>
            <person name="Sehra H.K."/>
            <person name="Shownkeen R."/>
            <person name="Sims S.K."/>
            <person name="Skuce C.D."/>
            <person name="Smith M."/>
            <person name="Steward C.A."/>
            <person name="Swarbreck D."/>
            <person name="Sycamore N."/>
            <person name="Tester J."/>
            <person name="Thorpe A."/>
            <person name="Tracey A."/>
            <person name="Tromans A."/>
            <person name="Thomas D.W."/>
            <person name="Wall M."/>
            <person name="Wallis J.M."/>
            <person name="West A.P."/>
            <person name="Whitehead S.L."/>
            <person name="Willey D.L."/>
            <person name="Williams S.A."/>
            <person name="Wilming L."/>
            <person name="Wray P.W."/>
            <person name="Young L."/>
            <person name="Ashurst J.L."/>
            <person name="Coulson A."/>
            <person name="Blocker H."/>
            <person name="Durbin R.M."/>
            <person name="Sulston J.E."/>
            <person name="Hubbard T."/>
            <person name="Jackson M.J."/>
            <person name="Bentley D.R."/>
            <person name="Beck S."/>
            <person name="Rogers J."/>
            <person name="Dunham I."/>
        </authorList>
    </citation>
    <scope>NUCLEOTIDE SEQUENCE [LARGE SCALE GENOMIC DNA]</scope>
</reference>
<reference key="5">
    <citation type="journal article" date="2004" name="Genome Res.">
        <title>The status, quality, and expansion of the NIH full-length cDNA project: the Mammalian Gene Collection (MGC).</title>
        <authorList>
            <consortium name="The MGC Project Team"/>
        </authorList>
    </citation>
    <scope>NUCLEOTIDE SEQUENCE [LARGE SCALE MRNA] (ISOFORM 1)</scope>
</reference>
<reference key="6">
    <citation type="journal article" date="2000" name="Am. J. Med. Genet.">
        <title>Haplotype-phenotype correlation in Fukuyama congenital muscular dystrophy.</title>
        <authorList>
            <person name="Saito K."/>
            <person name="Osawa M."/>
            <person name="Wang Z.-P."/>
            <person name="Ikeya K."/>
            <person name="Fukuyama Y."/>
            <person name="Kondo-Iida E."/>
            <person name="Toda T."/>
            <person name="Ohashi H."/>
            <person name="Kurosawa K."/>
            <person name="Wakai S."/>
            <person name="Kaneko K."/>
        </authorList>
    </citation>
    <scope>DISEASE</scope>
</reference>
<reference key="7">
    <citation type="journal article" date="2000" name="Hum. Mol. Genet.">
        <title>Neuronal expression of the fukutin gene.</title>
        <authorList>
            <person name="Sasaki J."/>
            <person name="Ishikawa K."/>
            <person name="Kobayashi K."/>
            <person name="Kondo-Iida E."/>
            <person name="Fukayama M."/>
            <person name="Mizusawa H."/>
            <person name="Takashima S."/>
            <person name="Sakakihara Y."/>
            <person name="Nakamura Y."/>
            <person name="Toda T."/>
        </authorList>
    </citation>
    <scope>TISSUE SPECIFICITY</scope>
    <scope>DISEASE</scope>
</reference>
<reference key="8">
    <citation type="journal article" date="2001" name="Neurology">
        <title>Selective deficiency of alpha-dystroglycan in Fukuyama-type congenital muscular dystrophy.</title>
        <authorList>
            <person name="Hayashi Y.K."/>
            <person name="Ogawa M."/>
            <person name="Tagawa K."/>
            <person name="Noguchi S."/>
            <person name="Ishihara T."/>
            <person name="Nonaka I."/>
            <person name="Arahata K."/>
        </authorList>
    </citation>
    <scope>DISEASE</scope>
    <scope>POSSIBLE FUNCTION</scope>
</reference>
<reference key="9">
    <citation type="journal article" date="2003" name="Ann. Neurol.">
        <title>A new mutation of the fukutin gene in a non-Japanese patient.</title>
        <authorList>
            <person name="Silan F."/>
            <person name="Yoshioka M."/>
            <person name="Kobayashi K."/>
            <person name="Simsek E."/>
            <person name="Tunc M."/>
            <person name="Alper M."/>
            <person name="Cam M."/>
            <person name="Guven A."/>
            <person name="Fukuda Y."/>
            <person name="Kinoshita M."/>
            <person name="Kocabay K."/>
            <person name="Toda T."/>
        </authorList>
    </citation>
    <scope>DISEASE</scope>
</reference>
<reference key="10">
    <citation type="journal article" date="2003" name="J. Med. Genet.">
        <title>A homozygous nonsense mutation in the fukutin gene causes a Walker-Warburg syndrome phenotype.</title>
        <authorList>
            <person name="Beltran-Valero de Bernabe D."/>
            <person name="van Bokhoven H."/>
            <person name="van Beusekom E."/>
            <person name="Van den Akker W."/>
            <person name="Kant S."/>
            <person name="Dobyns W.B."/>
            <person name="Cormand B."/>
            <person name="Currier S."/>
            <person name="Hamel B.C.J."/>
            <person name="Talim B."/>
            <person name="Topaloglu H."/>
            <person name="Brunner H.G."/>
        </authorList>
    </citation>
    <scope>INVOLVEMENT IN MDDGB4</scope>
    <scope>VARIANT ASP-446</scope>
</reference>
<reference key="11">
    <citation type="journal article" date="2006" name="Biochem. Biophys. Res. Commun.">
        <title>Molecular interaction between fukutin and POMGnT1 in the glycosylation pathway of alpha-dystroglycan.</title>
        <authorList>
            <person name="Xiong H."/>
            <person name="Kobayashi K."/>
            <person name="Tachikawa M."/>
            <person name="Manya H."/>
            <person name="Takeda S."/>
            <person name="Chiyonobu T."/>
            <person name="Fujikake N."/>
            <person name="Wang F."/>
            <person name="Nishimoto A."/>
            <person name="Morris G.E."/>
            <person name="Nagai Y."/>
            <person name="Kanagawa M."/>
            <person name="Endo T."/>
            <person name="Toda T."/>
        </authorList>
    </citation>
    <scope>FUNCTION</scope>
    <scope>SUBCELLULAR LOCATION</scope>
    <scope>INTERACTION WITH POMGNT1</scope>
    <scope>CHARACTERIZATION OF VARIANT MDDGA4 CYS-371</scope>
</reference>
<reference key="12">
    <citation type="journal article" date="2008" name="Clin. Genet.">
        <title>Two new patients bearing mutations in the fukutin gene confirm the relevance of this gene in Walker-Warburg syndrome.</title>
        <authorList>
            <person name="Cotarelo R.P."/>
            <person name="Valero M.C."/>
            <person name="Prados B."/>
            <person name="Pena A."/>
            <person name="Rodriguez L."/>
            <person name="Fano O."/>
            <person name="Marco J.J."/>
            <person name="Martinez-Frias M.L."/>
            <person name="Cruces J."/>
        </authorList>
    </citation>
    <scope>INVOLVEMENT IN MDDGB4</scope>
    <scope>VARIANT SER-125</scope>
</reference>
<reference key="13">
    <citation type="journal article" date="2012" name="Am. J. Hum. Genet.">
        <title>Exome sequencing and functional validation in zebrafish identify GTDC2 mutations as a cause of Walker-Warburg syndrome.</title>
        <authorList>
            <person name="Manzini M.C."/>
            <person name="Tambunan D.E."/>
            <person name="Hill R.S."/>
            <person name="Yu T.W."/>
            <person name="Maynard T.M."/>
            <person name="Heinzen E.L."/>
            <person name="Shianna K.V."/>
            <person name="Stevens C.R."/>
            <person name="Partlow J.N."/>
            <person name="Barry B.J."/>
            <person name="Rodriguez J."/>
            <person name="Gupta V.A."/>
            <person name="Al-Qudah A.K."/>
            <person name="Eyaid W.M."/>
            <person name="Friedman J.M."/>
            <person name="Salih M.A."/>
            <person name="Clark R."/>
            <person name="Moroni I."/>
            <person name="Mora M."/>
            <person name="Beggs A.H."/>
            <person name="Gabriel S.B."/>
            <person name="Walsh C.A."/>
        </authorList>
    </citation>
    <scope>INVOLVEMENT IN MDDGA4</scope>
</reference>
<reference key="14">
    <citation type="journal article" date="2014" name="Elife">
        <title>The glucuronyltransferase B4GAT1 is required for initiation of LARGE-mediated alpha-dystroglycan functional glycosylation.</title>
        <authorList>
            <person name="Willer T."/>
            <person name="Inamori K.I."/>
            <person name="Venzke D."/>
            <person name="Harvey C."/>
            <person name="Morgensen G."/>
            <person name="Hara Y."/>
            <person name="Beltran Valero de Bernabe D."/>
            <person name="Yu L."/>
            <person name="Wright K.M."/>
            <person name="Campbell K.P."/>
        </authorList>
    </citation>
    <scope>FUNCTION</scope>
    <scope>SUBCELLULAR LOCATION</scope>
    <scope>PATHWAY</scope>
</reference>
<reference key="15">
    <citation type="journal article" date="2016" name="Nat. Commun.">
        <title>ISPD produces CDP-ribitol used by FKTN and FKRP to transfer ribitol phosphate onto alpha-dystroglycan.</title>
        <authorList>
            <person name="Gerin I."/>
            <person name="Ury B."/>
            <person name="Breloy I."/>
            <person name="Bouchet-Seraphin C."/>
            <person name="Bolsee J."/>
            <person name="Halbout M."/>
            <person name="Graff J."/>
            <person name="Vertommen D."/>
            <person name="Muccioli G.G."/>
            <person name="Seta N."/>
            <person name="Cuisset J.M."/>
            <person name="Dabaj I."/>
            <person name="Quijano-Roy S."/>
            <person name="Grahn A."/>
            <person name="Van Schaftingen E."/>
            <person name="Bommer G.T."/>
        </authorList>
    </citation>
    <scope>FUNCTION</scope>
    <scope>PATHWAY</scope>
</reference>
<reference key="16">
    <citation type="journal article" date="2016" name="Cell Rep.">
        <title>Identification of a Post-translational Modification with Ribitol-Phosphate and Its Defect in Muscular Dystrophy.</title>
        <authorList>
            <person name="Kanagawa M."/>
            <person name="Kobayashi K."/>
            <person name="Tajiri M."/>
            <person name="Manya H."/>
            <person name="Kuga A."/>
            <person name="Yamaguchi Y."/>
            <person name="Akasaka-Manya K."/>
            <person name="Furukawa J.I."/>
            <person name="Mizuno M."/>
            <person name="Kawakami H."/>
            <person name="Shinohara Y."/>
            <person name="Wada Y."/>
            <person name="Endo T."/>
            <person name="Toda T."/>
        </authorList>
    </citation>
    <scope>FUNCTION</scope>
    <scope>CATALYTIC ACTIVITY</scope>
    <scope>PATHWAY</scope>
    <scope>SUBCELLULAR LOCATION</scope>
    <scope>VARIANT GLN-307</scope>
    <scope>MUTAGENESIS OF MET-133 AND ASP-317</scope>
</reference>
<reference key="17">
    <citation type="journal article" date="2018" name="Biochem. Biophys. Res. Commun.">
        <title>Cell endogenous activities of fukutin and FKRP coexist with the ribitol xylosyltransferase, TMEM5.</title>
        <authorList>
            <person name="Nishihara R."/>
            <person name="Kobayashi K."/>
            <person name="Imae R."/>
            <person name="Tsumoto H."/>
            <person name="Manya H."/>
            <person name="Mizuno M."/>
            <person name="Kanagawa M."/>
            <person name="Endo T."/>
            <person name="Toda T."/>
        </authorList>
    </citation>
    <scope>FUNCTION</scope>
    <scope>CATALYTIC ACTIVITY</scope>
    <scope>PATHWAY</scope>
    <scope>IDENTIFICATION IN A COMPLEX WITH FKRP AND RXYLT1</scope>
    <scope>SUBCELLULAR LOCATION</scope>
</reference>
<reference key="18">
    <citation type="journal article" date="2018" name="Mol. Vis.">
        <title>Expression in retinal neurons of fukutin and FKRP, the protein products of two dystroglycanopathy-causative genes.</title>
        <authorList>
            <person name="Haro C."/>
            <person name="Uribe M.L."/>
            <person name="Quereda C."/>
            <person name="Cruces J."/>
            <person name="Martin-Nieto J."/>
        </authorList>
    </citation>
    <scope>TISSUE SPECIFICITY</scope>
</reference>
<reference key="19">
    <citation type="journal article" date="1999" name="Hum. Mol. Genet.">
        <title>Novel mutations and genotype-phenotype relationships in 107 families with Fukuyama-type congenital muscular dystrophy (FCMD).</title>
        <authorList>
            <person name="Kondo-Iida E."/>
            <person name="Kobayashi K."/>
            <person name="Watanabe M."/>
            <person name="Sasaki J."/>
            <person name="Kumagai T."/>
            <person name="Koide H."/>
            <person name="Saito K."/>
            <person name="Osawa M."/>
            <person name="Nakamura Y."/>
            <person name="Toda T."/>
        </authorList>
    </citation>
    <scope>VARIANT MDDGA4 GLY-250</scope>
</reference>
<reference key="20">
    <citation type="journal article" date="2006" name="Ann. Neurol.">
        <title>Fukutin gene mutations cause dilated cardiomyopathy with minimal muscle weakness.</title>
        <authorList>
            <person name="Murakami T."/>
            <person name="Hayashi Y.K."/>
            <person name="Noguchi S."/>
            <person name="Ogawa M."/>
            <person name="Nonaka I."/>
            <person name="Tanabe Y."/>
            <person name="Ogino M."/>
            <person name="Takada F."/>
            <person name="Eriguchi M."/>
            <person name="Kotooka N."/>
            <person name="Campbell K.P."/>
            <person name="Osawa M."/>
            <person name="Nishino I."/>
        </authorList>
    </citation>
    <scope>VARIANTS CMD1X THR-179 AND PRO-358</scope>
</reference>
<reference key="21">
    <citation type="journal article" date="2006" name="Ann. Neurol.">
        <title>Fukutin gene mutations in steroid-responsive limb girdle muscular dystrophy.</title>
        <authorList>
            <person name="Godfrey C."/>
            <person name="Escolar D."/>
            <person name="Brockington M."/>
            <person name="Clement E.M."/>
            <person name="Mein R."/>
            <person name="Jimenez-Mallebrera C."/>
            <person name="Torelli S."/>
            <person name="Feng L."/>
            <person name="Brown S.C."/>
            <person name="Sewry C.A."/>
            <person name="Rutherford M."/>
            <person name="Shapira Y."/>
            <person name="Abbs S."/>
            <person name="Muntoni F."/>
        </authorList>
    </citation>
    <scope>VARIANT MDDGC4 GLN-307</scope>
    <scope>CHARACTERIZATION OF VARIANT MDDGC4 GLN-307</scope>
</reference>
<reference key="22">
    <citation type="journal article" date="2006" name="Science">
        <title>The consensus coding sequences of human breast and colorectal cancers.</title>
        <authorList>
            <person name="Sjoeblom T."/>
            <person name="Jones S."/>
            <person name="Wood L.D."/>
            <person name="Parsons D.W."/>
            <person name="Lin J."/>
            <person name="Barber T.D."/>
            <person name="Mandelker D."/>
            <person name="Leary R.J."/>
            <person name="Ptak J."/>
            <person name="Silliman N."/>
            <person name="Szabo S."/>
            <person name="Buckhaults P."/>
            <person name="Farrell C."/>
            <person name="Meeh P."/>
            <person name="Markowitz S.D."/>
            <person name="Willis J."/>
            <person name="Dawson D."/>
            <person name="Willson J.K.V."/>
            <person name="Gazdar A.F."/>
            <person name="Hartigan J."/>
            <person name="Wu L."/>
            <person name="Liu C."/>
            <person name="Parmigiani G."/>
            <person name="Park B.H."/>
            <person name="Bachman K.E."/>
            <person name="Papadopoulos N."/>
            <person name="Vogelstein B."/>
            <person name="Kinzler K.W."/>
            <person name="Velculescu V.E."/>
        </authorList>
    </citation>
    <scope>VARIANTS [LARGE SCALE ANALYSIS] GLU-225 AND ASN-225</scope>
</reference>
<reference key="23">
    <citation type="journal article" date="2009" name="Neurology">
        <title>Congenital muscular dystrophies with defective glycosylation of dystroglycan: a population study.</title>
        <authorList>
            <person name="Mercuri E."/>
            <person name="Messina S."/>
            <person name="Bruno C."/>
            <person name="Mora M."/>
            <person name="Pegoraro E."/>
            <person name="Comi G.P."/>
            <person name="D'Amico A."/>
            <person name="Aiello C."/>
            <person name="Biancheri R."/>
            <person name="Berardinelli A."/>
            <person name="Boffi P."/>
            <person name="Cassandrini D."/>
            <person name="Laverda A."/>
            <person name="Moggio M."/>
            <person name="Morandi L."/>
            <person name="Moroni I."/>
            <person name="Pane M."/>
            <person name="Pezzani R."/>
            <person name="Pichiecchio A."/>
            <person name="Pini A."/>
            <person name="Minetti C."/>
            <person name="Mongini T."/>
            <person name="Mottarelli E."/>
            <person name="Ricci E."/>
            <person name="Ruggieri A."/>
            <person name="Saredi S."/>
            <person name="Scuderi C."/>
            <person name="Tessa A."/>
            <person name="Toscano A."/>
            <person name="Tortorella G."/>
            <person name="Trevisan C.P."/>
            <person name="Uggetti C."/>
            <person name="Vasco G."/>
            <person name="Santorelli F.M."/>
            <person name="Bertini E."/>
        </authorList>
    </citation>
    <scope>VARIANT MDDGB4 GLN-307</scope>
</reference>
<reference key="24">
    <citation type="journal article" date="2009" name="Neuromuscul. Disord.">
        <title>Four Caucasian patients with mutations in the fukutin gene and variable clinical phenotype.</title>
        <authorList>
            <person name="Vuillaumier-Barrot S."/>
            <person name="Quijano-Roy S."/>
            <person name="Bouchet-Seraphin C."/>
            <person name="Maugenre S."/>
            <person name="Peudenier S."/>
            <person name="Van den Bergh P."/>
            <person name="Marcorelles P."/>
            <person name="Avila-Smirnow D."/>
            <person name="Chelbi M."/>
            <person name="Romero N.B."/>
            <person name="Carlier R.Y."/>
            <person name="Estournet B."/>
            <person name="Guicheney P."/>
            <person name="Seta N."/>
        </authorList>
    </citation>
    <scope>VARIANTS MDDGA4 GLU-170 AND CYS-371</scope>
    <scope>VARIANTS MDDGB4 GLY-246 AND GLN-307</scope>
</reference>
<reference key="25">
    <citation type="journal article" date="2009" name="Neuromuscul. Disord.">
        <title>Further evidence of Fukutin mutations as a cause of childhood onset limb-girdle muscular dystrophy without mental retardation.</title>
        <authorList>
            <person name="Puckett R.L."/>
            <person name="Moore S.A."/>
            <person name="Winder T.L."/>
            <person name="Willer T."/>
            <person name="Romansky S.G."/>
            <person name="Covault K.K."/>
            <person name="Campbell K.P."/>
            <person name="Abdenur J.E."/>
        </authorList>
    </citation>
    <scope>VARIANTS MDDGC4 THR-114 AND SER-176</scope>
</reference>
<reference key="26">
    <citation type="journal article" date="2014" name="Gene">
        <title>Novel mutation in the fukutin gene in an Egyptian family with Fukuyama congenital muscular dystrophy and microcephaly.</title>
        <authorList>
            <person name="Ismail S."/>
            <person name="Schaffer A.E."/>
            <person name="Rosti R.O."/>
            <person name="Gleeson J.G."/>
            <person name="Zaki M.S."/>
        </authorList>
    </citation>
    <scope>INVOLVEMENT IN MDDGA4</scope>
</reference>
<comment type="function">
    <text evidence="7 16 17 18 20 27">Catalyzes the transfer of a ribitol-phosphate from CDP-ribitol to the distal N-acetylgalactosamine of the phosphorylated O-mannosyl trisaccharide (N-acetylgalactosamine-beta-3-N-acetylglucosamine-beta-4-(phosphate-6-)mannose), a carbohydrate structure present in alpha-dystroglycan (DAG1) (PubMed:26923585, PubMed:27194101, PubMed:29477842). This constitutes the first step in the formation of the ribitol 5-phosphate tandem repeat which links the phosphorylated O-mannosyl trisaccharide to the ligand binding moiety composed of repeats of 3-xylosyl-alpha-1,3-glucuronic acid-beta-1 (PubMed:17034757, PubMed:25279699, PubMed:26923585, PubMed:27194101, PubMed:29477842). Required for normal location of POMGNT1 in Golgi membranes, and for normal POMGNT1 activity (PubMed:17034757). May interact with and reinforce a large complex encompassing the outside and inside of muscle membranes (PubMed:25279699). Could be involved in brain development (Probable).</text>
</comment>
<comment type="catalytic activity">
    <reaction evidence="17 20">
        <text>3-O-[beta-D-GalNAc-(1-&gt;3)-beta-D-GlcNAc-(1-&gt;4)-(O-6-P-alpha-D-Man)]-Thr-[protein] + CDP-L-ribitol = 3-O-[Rib-ol-P-3-beta-D-GalNAc-(1-&gt;3)-beta-D-GlcNAc-(1-&gt;4)-(O-6-P-alpha-D-Man)]-Thr-[protein] + CMP + H(+)</text>
        <dbReference type="Rhea" id="RHEA:36551"/>
        <dbReference type="Rhea" id="RHEA-COMP:13309"/>
        <dbReference type="Rhea" id="RHEA-COMP:17480"/>
        <dbReference type="ChEBI" id="CHEBI:15378"/>
        <dbReference type="ChEBI" id="CHEBI:57608"/>
        <dbReference type="ChEBI" id="CHEBI:60377"/>
        <dbReference type="ChEBI" id="CHEBI:136710"/>
        <dbReference type="ChEBI" id="CHEBI:177331"/>
    </reaction>
    <physiologicalReaction direction="left-to-right" evidence="17">
        <dbReference type="Rhea" id="RHEA:36552"/>
    </physiologicalReaction>
</comment>
<comment type="pathway">
    <text evidence="16 17 18 20">Protein modification; protein glycosylation.</text>
</comment>
<comment type="subunit">
    <text evidence="7 20">Forms a complex composed of FKTN/fukutin, FKRP and RXYLT1/TMEM5 (PubMed:29477842). Interacts (via transmembrane domain) with POMGNT1; the interaction is direct and is required for normal POMGNT1 location in Golgi membranes (PubMed:17034757).</text>
</comment>
<comment type="interaction">
    <interactant intactId="EBI-21511782">
        <id>O75072</id>
    </interactant>
    <interactant intactId="EBI-3912424">
        <id>Q8WZA1</id>
        <label>POMGNT1</label>
    </interactant>
    <organismsDiffer>false</organismsDiffer>
    <experiments>7</experiments>
</comment>
<comment type="interaction">
    <interactant intactId="EBI-21511782">
        <id>O75072</id>
    </interactant>
    <interactant intactId="EBI-3914763">
        <id>Q9Y2B1</id>
        <label>RXYLT1</label>
    </interactant>
    <organismsDiffer>false</organismsDiffer>
    <experiments>5</experiments>
</comment>
<comment type="subcellular location">
    <subcellularLocation>
        <location evidence="16 20 28">Golgi apparatus membrane</location>
        <topology evidence="26">Single-pass type II membrane protein</topology>
    </subcellularLocation>
    <subcellularLocation>
        <location evidence="1">Cytoplasm</location>
    </subcellularLocation>
    <subcellularLocation>
        <location evidence="1">Nucleus</location>
    </subcellularLocation>
    <text evidence="1">In retinal tissue, does not localize with the Golgi apparatus.</text>
</comment>
<comment type="alternative products">
    <event type="alternative splicing"/>
    <isoform>
        <id>O75072-1</id>
        <name>1</name>
        <sequence type="displayed"/>
    </isoform>
    <isoform>
        <id>O75072-2</id>
        <name>2</name>
        <sequence type="described" ref="VSP_045961"/>
    </isoform>
</comment>
<comment type="tissue specificity">
    <text evidence="4 19">Expressed in the retina (at protein level) (PubMed:29416295). Widely expressed with highest expression in brain, heart, pancreas and skeletal muscle (PubMed:11115853). Expressed at similar levels in control fetal and adult brain (PubMed:11115853). Expressed in migrating neurons, including Cajar-Retzius cells and adult cortical neurons, as well as hippocampal pyramidal cells and cerebellar Purkinje cells (PubMed:11115853). No expression observed in the glia limitans, the subpial astrocytes (which contribute to basement membrane formation) or other glial cells (PubMed:11115853).</text>
</comment>
<comment type="disease" evidence="3 7 11 14 15">
    <disease id="DI-00364">
        <name>Muscular dystrophy-dystroglycanopathy congenital with brain and eye anomalies A4</name>
        <acronym>MDDGA4</acronym>
        <description>An autosomal recessive disorder characterized by congenital muscular dystrophy associated with cobblestone lissencephaly and other brain anomalies, eye malformations, profound intellectual disability, and death usually in the first years of life. Included diseases are the more severe Walker-Warburg syndrome and the slightly less severe muscle-eye-brain disease.</description>
        <dbReference type="MIM" id="253800"/>
    </disease>
    <text>The disease is caused by variants affecting the gene represented in this entry.</text>
</comment>
<comment type="disease" evidence="5 10 11 12">
    <disease id="DI-02728">
        <name>Muscular dystrophy-dystroglycanopathy congenital without impaired intellectual development B4</name>
        <acronym>MDDGB4</acronym>
        <description>An autosomal recessive disorder characterized by congenital muscular dystrophy and evidence of dystroglycanopathy. Features included increased serum creatine kinase, generalized weakness, mild white matter changes on brain MRI, and absence of intellectual disability.</description>
        <dbReference type="MIM" id="613152"/>
    </disease>
    <text>The disease is caused by variants affecting the gene represented in this entry.</text>
</comment>
<comment type="disease" evidence="9 13">
    <disease id="DI-00669">
        <name>Muscular dystrophy-dystroglycanopathy limb-girdle C4</name>
        <acronym>MDDGC4</acronym>
        <description>An autosomal recessive degenerative myopathy characterized by progressive weakness of the pelvic and shoulder girdle muscles, and elevated serum creatine kinase. MDDGC4 has no brain involvement and a remarkable clinical response to corticosteroids.</description>
        <dbReference type="MIM" id="611588"/>
    </disease>
    <text>The disease is caused by variants affecting the gene represented in this entry.</text>
</comment>
<comment type="disease" evidence="8">
    <disease id="DI-00227">
        <name>Cardiomyopathy, dilated, 1X</name>
        <acronym>CMD1X</acronym>
        <description>A disorder characterized by ventricular dilation and impaired systolic function, resulting in congestive heart failure and arrhythmia. Patients are at risk of premature death.</description>
        <dbReference type="MIM" id="611615"/>
    </disease>
    <text>The disease is caused by variants affecting the gene represented in this entry.</text>
</comment>
<comment type="similarity">
    <text evidence="26">Belongs to the LicD transferase family.</text>
</comment>
<keyword id="KW-0025">Alternative splicing</keyword>
<keyword id="KW-0122">Cardiomyopathy</keyword>
<keyword id="KW-0912">Congenital muscular dystrophy</keyword>
<keyword id="KW-0963">Cytoplasm</keyword>
<keyword id="KW-0225">Disease variant</keyword>
<keyword id="KW-1215">Dystroglycanopathy</keyword>
<keyword id="KW-0325">Glycoprotein</keyword>
<keyword id="KW-0333">Golgi apparatus</keyword>
<keyword id="KW-0947">Limb-girdle muscular dystrophy</keyword>
<keyword id="KW-0451">Lissencephaly</keyword>
<keyword id="KW-0472">Membrane</keyword>
<keyword id="KW-0539">Nucleus</keyword>
<keyword id="KW-1267">Proteomics identification</keyword>
<keyword id="KW-1185">Reference proteome</keyword>
<keyword id="KW-0735">Signal-anchor</keyword>
<keyword id="KW-0808">Transferase</keyword>
<keyword id="KW-0812">Transmembrane</keyword>
<keyword id="KW-1133">Transmembrane helix</keyword>